<sequence>MSSVTTPAPVYTWTADEAIKFLKEWNFSLGIILLFITVILQFGYTSRSMFVYVIKMIILWLMWPLTIILTIFNCVYALNNVYLGFSIVFTIVAIIMWIVYFVNSIRLFIRTGSWWSFNPETNNLMCIDMKGRMYVRPIIEDYHTLTVTIIRGHLYMQGIKLGTGYSLSDLPAYVTVAKVSHLLTYKRGFLDKIGDTSGFAVYVKSKVGNYRLPSTQKGSGMDTALLRNNI</sequence>
<gene>
    <name evidence="1" type="primary">M</name>
    <name type="ORF">6</name>
</gene>
<feature type="chain" id="PRO_0000106025" description="Membrane protein">
    <location>
        <begin position="1"/>
        <end position="230"/>
    </location>
</feature>
<feature type="topological domain" description="Virion surface" evidence="1">
    <location>
        <begin position="1"/>
        <end position="24"/>
    </location>
</feature>
<feature type="transmembrane region" description="Helical" evidence="1">
    <location>
        <begin position="25"/>
        <end position="45"/>
    </location>
</feature>
<feature type="topological domain" description="Intravirion" evidence="1">
    <location>
        <begin position="46"/>
        <end position="55"/>
    </location>
</feature>
<feature type="transmembrane region" description="Helical" evidence="1">
    <location>
        <begin position="56"/>
        <end position="76"/>
    </location>
</feature>
<feature type="topological domain" description="Virion surface" evidence="1">
    <location>
        <begin position="77"/>
        <end position="84"/>
    </location>
</feature>
<feature type="transmembrane region" description="Helical" evidence="1">
    <location>
        <begin position="85"/>
        <end position="105"/>
    </location>
</feature>
<feature type="topological domain" description="Intravirion" evidence="1">
    <location>
        <begin position="106"/>
        <end position="228"/>
    </location>
</feature>
<name>VME1_CVBLS</name>
<organismHost>
    <name type="scientific">Bos taurus</name>
    <name type="common">Bovine</name>
    <dbReference type="NCBI Taxonomy" id="9913"/>
</organismHost>
<keyword id="KW-0325">Glycoprotein</keyword>
<keyword id="KW-1040">Host Golgi apparatus</keyword>
<keyword id="KW-1043">Host membrane</keyword>
<keyword id="KW-0945">Host-virus interaction</keyword>
<keyword id="KW-0472">Membrane</keyword>
<keyword id="KW-0812">Transmembrane</keyword>
<keyword id="KW-1133">Transmembrane helix</keyword>
<keyword id="KW-0261">Viral envelope protein</keyword>
<keyword id="KW-0899">Viral immunoevasion</keyword>
<keyword id="KW-0468">Viral matrix protein</keyword>
<keyword id="KW-0946">Virion</keyword>
<evidence type="ECO:0000255" key="1">
    <source>
        <dbReference type="HAMAP-Rule" id="MF_04202"/>
    </source>
</evidence>
<evidence type="ECO:0000255" key="2">
    <source>
        <dbReference type="PROSITE-ProRule" id="PRU01275"/>
    </source>
</evidence>
<reference key="1">
    <citation type="journal article" date="1998" name="Virus Genes">
        <title>Nucleotide and predicted amino acid sequences of all genes encoded by the 3' genomic portion (9.5 kb) of respiratory bovine coronaviruses and comparisons among respiratory and enteric coronaviruses.</title>
        <authorList>
            <person name="Chouljenko V.N."/>
            <person name="Kousoulas K.G."/>
            <person name="Lin X.Q."/>
            <person name="Storz J."/>
        </authorList>
    </citation>
    <scope>NUCLEOTIDE SEQUENCE [GENOMIC RNA]</scope>
</reference>
<protein>
    <recommendedName>
        <fullName evidence="1">Membrane protein</fullName>
        <shortName evidence="1">M protein</shortName>
    </recommendedName>
    <alternativeName>
        <fullName evidence="1">E1 glycoprotein</fullName>
    </alternativeName>
    <alternativeName>
        <fullName evidence="1">Matrix glycoprotein</fullName>
    </alternativeName>
    <alternativeName>
        <fullName evidence="1">Membrane glycoprotein</fullName>
    </alternativeName>
</protein>
<comment type="function">
    <text evidence="1 2">Component of the viral envelope that plays a central role in virus morphogenesis and assembly via its interactions with other viral proteins.</text>
</comment>
<comment type="subunit">
    <text evidence="1 2">Homomultimer. Interacts with envelope E protein in the budding compartment of the host cell, which is located between endoplasmic reticulum and the Golgi complex. Forms a complex with HE and S proteins. Interacts with nucleocapsid N protein. This interaction probably participates in RNA packaging into the virus.</text>
</comment>
<comment type="subcellular location">
    <subcellularLocation>
        <location evidence="1">Virion membrane</location>
        <topology evidence="1">Multi-pass membrane protein</topology>
    </subcellularLocation>
    <subcellularLocation>
        <location evidence="1">Host Golgi apparatus membrane</location>
        <topology evidence="1">Multi-pass membrane protein</topology>
    </subcellularLocation>
    <text evidence="1">Largely embedded in the lipid bilayer.</text>
</comment>
<comment type="similarity">
    <text evidence="1">Belongs to the betacoronaviruses M protein family.</text>
</comment>
<accession>P69599</accession>
<accession>Q9PWZ0</accession>
<organism>
    <name type="scientific">Bovine coronavirus (strain LSU-94LSS-051)</name>
    <name type="common">BCoV-LSU</name>
    <name type="synonym">BCV</name>
    <dbReference type="NCBI Taxonomy" id="233261"/>
    <lineage>
        <taxon>Viruses</taxon>
        <taxon>Riboviria</taxon>
        <taxon>Orthornavirae</taxon>
        <taxon>Pisuviricota</taxon>
        <taxon>Pisoniviricetes</taxon>
        <taxon>Nidovirales</taxon>
        <taxon>Cornidovirineae</taxon>
        <taxon>Coronaviridae</taxon>
        <taxon>Orthocoronavirinae</taxon>
        <taxon>Betacoronavirus</taxon>
        <taxon>Embecovirus</taxon>
        <taxon>Betacoronavirus 1</taxon>
    </lineage>
</organism>
<dbReference type="EMBL" id="AF058943">
    <property type="protein sequence ID" value="AAF25514.1"/>
    <property type="molecule type" value="Genomic_RNA"/>
</dbReference>
<dbReference type="SMR" id="P69599"/>
<dbReference type="GO" id="GO:0044178">
    <property type="term" value="C:host cell Golgi membrane"/>
    <property type="evidence" value="ECO:0007669"/>
    <property type="project" value="UniProtKB-SubCell"/>
</dbReference>
<dbReference type="GO" id="GO:0016020">
    <property type="term" value="C:membrane"/>
    <property type="evidence" value="ECO:0007669"/>
    <property type="project" value="UniProtKB-UniRule"/>
</dbReference>
<dbReference type="GO" id="GO:0019031">
    <property type="term" value="C:viral envelope"/>
    <property type="evidence" value="ECO:0007669"/>
    <property type="project" value="UniProtKB-UniRule"/>
</dbReference>
<dbReference type="GO" id="GO:0055036">
    <property type="term" value="C:virion membrane"/>
    <property type="evidence" value="ECO:0007669"/>
    <property type="project" value="UniProtKB-SubCell"/>
</dbReference>
<dbReference type="GO" id="GO:0039660">
    <property type="term" value="F:structural constituent of virion"/>
    <property type="evidence" value="ECO:0007669"/>
    <property type="project" value="UniProtKB-UniRule"/>
</dbReference>
<dbReference type="CDD" id="cd21568">
    <property type="entry name" value="HCoV-like_M"/>
    <property type="match status" value="1"/>
</dbReference>
<dbReference type="HAMAP" id="MF_04202">
    <property type="entry name" value="BETA_CORONA_M"/>
    <property type="match status" value="1"/>
</dbReference>
<dbReference type="InterPro" id="IPR002574">
    <property type="entry name" value="M_CoV"/>
</dbReference>
<dbReference type="InterPro" id="IPR044362">
    <property type="entry name" value="M_HCoV-like"/>
</dbReference>
<dbReference type="Pfam" id="PF01635">
    <property type="entry name" value="CoV_M"/>
    <property type="match status" value="1"/>
</dbReference>
<dbReference type="PROSITE" id="PS51927">
    <property type="entry name" value="COV_M"/>
    <property type="match status" value="1"/>
</dbReference>
<proteinExistence type="inferred from homology"/>